<accession>Q57754</accession>
<proteinExistence type="predicted"/>
<name>Y306_METJA</name>
<dbReference type="EMBL" id="L77117">
    <property type="protein sequence ID" value="AAB98298.1"/>
    <property type="molecule type" value="Genomic_DNA"/>
</dbReference>
<dbReference type="PIR" id="C64338">
    <property type="entry name" value="C64338"/>
</dbReference>
<dbReference type="SMR" id="Q57754"/>
<dbReference type="STRING" id="243232.MJ_0306"/>
<dbReference type="PaxDb" id="243232-MJ_0306"/>
<dbReference type="EnsemblBacteria" id="AAB98298">
    <property type="protein sequence ID" value="AAB98298"/>
    <property type="gene ID" value="MJ_0306"/>
</dbReference>
<dbReference type="KEGG" id="mja:MJ_0306"/>
<dbReference type="eggNOG" id="arCOG08293">
    <property type="taxonomic scope" value="Archaea"/>
</dbReference>
<dbReference type="HOGENOM" id="CLU_197247_0_0_2"/>
<dbReference type="InParanoid" id="Q57754"/>
<dbReference type="Proteomes" id="UP000000805">
    <property type="component" value="Chromosome"/>
</dbReference>
<gene>
    <name type="ordered locus">MJ0306</name>
</gene>
<feature type="chain" id="PRO_0000106784" description="Uncharacterized protein MJ0306">
    <location>
        <begin position="1"/>
        <end position="78"/>
    </location>
</feature>
<sequence>MRQSKKDYKLKIFNLVKVMKLRVVCKDENLTDDELCIKCELCIGKDLMTIIEMMNEEYKIDEIIIPNCETLKRILNMD</sequence>
<keyword id="KW-1185">Reference proteome</keyword>
<reference key="1">
    <citation type="journal article" date="1996" name="Science">
        <title>Complete genome sequence of the methanogenic archaeon, Methanococcus jannaschii.</title>
        <authorList>
            <person name="Bult C.J."/>
            <person name="White O."/>
            <person name="Olsen G.J."/>
            <person name="Zhou L."/>
            <person name="Fleischmann R.D."/>
            <person name="Sutton G.G."/>
            <person name="Blake J.A."/>
            <person name="FitzGerald L.M."/>
            <person name="Clayton R.A."/>
            <person name="Gocayne J.D."/>
            <person name="Kerlavage A.R."/>
            <person name="Dougherty B.A."/>
            <person name="Tomb J.-F."/>
            <person name="Adams M.D."/>
            <person name="Reich C.I."/>
            <person name="Overbeek R."/>
            <person name="Kirkness E.F."/>
            <person name="Weinstock K.G."/>
            <person name="Merrick J.M."/>
            <person name="Glodek A."/>
            <person name="Scott J.L."/>
            <person name="Geoghagen N.S.M."/>
            <person name="Weidman J.F."/>
            <person name="Fuhrmann J.L."/>
            <person name="Nguyen D."/>
            <person name="Utterback T.R."/>
            <person name="Kelley J.M."/>
            <person name="Peterson J.D."/>
            <person name="Sadow P.W."/>
            <person name="Hanna M.C."/>
            <person name="Cotton M.D."/>
            <person name="Roberts K.M."/>
            <person name="Hurst M.A."/>
            <person name="Kaine B.P."/>
            <person name="Borodovsky M."/>
            <person name="Klenk H.-P."/>
            <person name="Fraser C.M."/>
            <person name="Smith H.O."/>
            <person name="Woese C.R."/>
            <person name="Venter J.C."/>
        </authorList>
    </citation>
    <scope>NUCLEOTIDE SEQUENCE [LARGE SCALE GENOMIC DNA]</scope>
    <source>
        <strain>ATCC 43067 / DSM 2661 / JAL-1 / JCM 10045 / NBRC 100440</strain>
    </source>
</reference>
<protein>
    <recommendedName>
        <fullName>Uncharacterized protein MJ0306</fullName>
    </recommendedName>
</protein>
<organism>
    <name type="scientific">Methanocaldococcus jannaschii (strain ATCC 43067 / DSM 2661 / JAL-1 / JCM 10045 / NBRC 100440)</name>
    <name type="common">Methanococcus jannaschii</name>
    <dbReference type="NCBI Taxonomy" id="243232"/>
    <lineage>
        <taxon>Archaea</taxon>
        <taxon>Methanobacteriati</taxon>
        <taxon>Methanobacteriota</taxon>
        <taxon>Methanomada group</taxon>
        <taxon>Methanococci</taxon>
        <taxon>Methanococcales</taxon>
        <taxon>Methanocaldococcaceae</taxon>
        <taxon>Methanocaldococcus</taxon>
    </lineage>
</organism>